<organismHost>
    <name type="scientific">Homo sapiens</name>
    <name type="common">Human</name>
    <dbReference type="NCBI Taxonomy" id="9606"/>
</organismHost>
<organismHost>
    <name type="scientific">Pan troglodytes</name>
    <name type="common">Chimpanzee</name>
    <dbReference type="NCBI Taxonomy" id="9598"/>
</organismHost>
<accession>Q80IU7</accession>
<keyword id="KW-0235">DNA replication</keyword>
<keyword id="KW-0238">DNA-binding</keyword>
<keyword id="KW-0239">DNA-directed DNA polymerase</keyword>
<keyword id="KW-0255">Endonuclease</keyword>
<keyword id="KW-0945">Host-virus interaction</keyword>
<keyword id="KW-0378">Hydrolase</keyword>
<keyword id="KW-1090">Inhibition of host innate immune response by virus</keyword>
<keyword id="KW-1113">Inhibition of host RLR pathway by virus</keyword>
<keyword id="KW-0460">Magnesium</keyword>
<keyword id="KW-0479">Metal-binding</keyword>
<keyword id="KW-0511">Multifunctional enzyme</keyword>
<keyword id="KW-0540">Nuclease</keyword>
<keyword id="KW-0548">Nucleotidyltransferase</keyword>
<keyword id="KW-0695">RNA-directed DNA polymerase</keyword>
<keyword id="KW-0808">Transferase</keyword>
<keyword id="KW-0899">Viral immunoevasion</keyword>
<evidence type="ECO:0000255" key="1">
    <source>
        <dbReference type="HAMAP-Rule" id="MF_04073"/>
    </source>
</evidence>
<evidence type="ECO:0000256" key="2">
    <source>
        <dbReference type="SAM" id="MobiDB-lite"/>
    </source>
</evidence>
<reference key="1">
    <citation type="submission" date="2002-09" db="EMBL/GenBank/DDBJ databases">
        <title>Distribution of Hepatitis B Virus (HBV) genotypes among HBV carriers in Cote d'Ivoire: complete genome sequence and phylogenetic relatedness of HBV genotype E.</title>
        <authorList>
            <person name="Suzuki S."/>
            <person name="Sugauchi F."/>
            <person name="Orito E."/>
            <person name="Kato H."/>
            <person name="Usuda S."/>
            <person name="Siransy L."/>
            <person name="Arita I."/>
            <person name="Sakamoto Y."/>
            <person name="Yoshihara N."/>
            <person name="El-Gohary A."/>
            <person name="Ueda R."/>
            <person name="Mizokami M."/>
        </authorList>
    </citation>
    <scope>NUCLEOTIDE SEQUENCE [GENOMIC DNA]</scope>
</reference>
<reference key="2">
    <citation type="journal article" date="2007" name="World J. Gastroenterol.">
        <title>Hepatitis B virus replication.</title>
        <authorList>
            <person name="Beck J."/>
            <person name="Nassal M."/>
        </authorList>
    </citation>
    <scope>REVIEW</scope>
</reference>
<feature type="chain" id="PRO_0000323271" description="Protein P">
    <location>
        <begin position="1"/>
        <end position="842"/>
    </location>
</feature>
<feature type="domain" description="Reverse transcriptase" evidence="1">
    <location>
        <begin position="356"/>
        <end position="599"/>
    </location>
</feature>
<feature type="region of interest" description="Terminal protein domain (TP)" evidence="1">
    <location>
        <begin position="1"/>
        <end position="177"/>
    </location>
</feature>
<feature type="region of interest" description="Spacer" evidence="1">
    <location>
        <begin position="178"/>
        <end position="345"/>
    </location>
</feature>
<feature type="region of interest" description="Disordered" evidence="2">
    <location>
        <begin position="186"/>
        <end position="273"/>
    </location>
</feature>
<feature type="region of interest" description="Polymerase/reverse transcriptase domain (RT)" evidence="1">
    <location>
        <begin position="346"/>
        <end position="689"/>
    </location>
</feature>
<feature type="compositionally biased region" description="Polar residues" evidence="2">
    <location>
        <begin position="223"/>
        <end position="239"/>
    </location>
</feature>
<feature type="binding site" evidence="1">
    <location>
        <position position="428"/>
    </location>
    <ligand>
        <name>Mg(2+)</name>
        <dbReference type="ChEBI" id="CHEBI:18420"/>
        <note>catalytic</note>
    </ligand>
</feature>
<feature type="binding site" evidence="1">
    <location>
        <position position="550"/>
    </location>
    <ligand>
        <name>Mg(2+)</name>
        <dbReference type="ChEBI" id="CHEBI:18420"/>
        <note>catalytic</note>
    </ligand>
</feature>
<feature type="binding site" evidence="1">
    <location>
        <position position="551"/>
    </location>
    <ligand>
        <name>Mg(2+)</name>
        <dbReference type="ChEBI" id="CHEBI:18420"/>
        <note>catalytic</note>
    </ligand>
</feature>
<feature type="site" description="Priming of reverse-transcription by covalently linking the first nucleotide of the (-)DNA" evidence="1">
    <location>
        <position position="63"/>
    </location>
</feature>
<dbReference type="EC" id="2.7.7.7" evidence="1"/>
<dbReference type="EC" id="2.7.7.49" evidence="1"/>
<dbReference type="EC" id="3.1.26.4" evidence="1"/>
<dbReference type="EMBL" id="AB091255">
    <property type="protein sequence ID" value="BAC65104.1"/>
    <property type="molecule type" value="Genomic_DNA"/>
</dbReference>
<dbReference type="Proteomes" id="UP000001387">
    <property type="component" value="Genome"/>
</dbReference>
<dbReference type="GO" id="GO:0003677">
    <property type="term" value="F:DNA binding"/>
    <property type="evidence" value="ECO:0007669"/>
    <property type="project" value="UniProtKB-UniRule"/>
</dbReference>
<dbReference type="GO" id="GO:0003887">
    <property type="term" value="F:DNA-directed DNA polymerase activity"/>
    <property type="evidence" value="ECO:0007669"/>
    <property type="project" value="UniProtKB-UniRule"/>
</dbReference>
<dbReference type="GO" id="GO:0046872">
    <property type="term" value="F:metal ion binding"/>
    <property type="evidence" value="ECO:0007669"/>
    <property type="project" value="UniProtKB-UniRule"/>
</dbReference>
<dbReference type="GO" id="GO:0003964">
    <property type="term" value="F:RNA-directed DNA polymerase activity"/>
    <property type="evidence" value="ECO:0007669"/>
    <property type="project" value="UniProtKB-UniRule"/>
</dbReference>
<dbReference type="GO" id="GO:0004523">
    <property type="term" value="F:RNA-DNA hybrid ribonuclease activity"/>
    <property type="evidence" value="ECO:0007669"/>
    <property type="project" value="UniProtKB-UniRule"/>
</dbReference>
<dbReference type="GO" id="GO:0006260">
    <property type="term" value="P:DNA replication"/>
    <property type="evidence" value="ECO:0007669"/>
    <property type="project" value="UniProtKB-UniRule"/>
</dbReference>
<dbReference type="GO" id="GO:0052170">
    <property type="term" value="P:symbiont-mediated suppression of host innate immune response"/>
    <property type="evidence" value="ECO:0007669"/>
    <property type="project" value="UniProtKB-UniRule"/>
</dbReference>
<dbReference type="FunFam" id="3.30.70.270:FF:000009">
    <property type="entry name" value="Protein P"/>
    <property type="match status" value="1"/>
</dbReference>
<dbReference type="Gene3D" id="3.30.70.270">
    <property type="match status" value="1"/>
</dbReference>
<dbReference type="HAMAP" id="MF_04073">
    <property type="entry name" value="HBV_DPOL"/>
    <property type="match status" value="1"/>
</dbReference>
<dbReference type="InterPro" id="IPR043502">
    <property type="entry name" value="DNA/RNA_pol_sf"/>
</dbReference>
<dbReference type="InterPro" id="IPR001462">
    <property type="entry name" value="DNApol_viral_C"/>
</dbReference>
<dbReference type="InterPro" id="IPR000201">
    <property type="entry name" value="DNApol_viral_N"/>
</dbReference>
<dbReference type="InterPro" id="IPR037531">
    <property type="entry name" value="HBV_DPOL"/>
</dbReference>
<dbReference type="InterPro" id="IPR043128">
    <property type="entry name" value="Rev_trsase/Diguanyl_cyclase"/>
</dbReference>
<dbReference type="InterPro" id="IPR000477">
    <property type="entry name" value="RT_dom"/>
</dbReference>
<dbReference type="InterPro" id="IPR051320">
    <property type="entry name" value="Viral_Replic_Matur_Polypro"/>
</dbReference>
<dbReference type="PANTHER" id="PTHR33064">
    <property type="entry name" value="POL PROTEIN"/>
    <property type="match status" value="1"/>
</dbReference>
<dbReference type="PANTHER" id="PTHR33064:SF37">
    <property type="entry name" value="RIBONUCLEASE H"/>
    <property type="match status" value="1"/>
</dbReference>
<dbReference type="Pfam" id="PF00336">
    <property type="entry name" value="DNA_pol_viral_C"/>
    <property type="match status" value="1"/>
</dbReference>
<dbReference type="Pfam" id="PF00242">
    <property type="entry name" value="DNA_pol_viral_N"/>
    <property type="match status" value="1"/>
</dbReference>
<dbReference type="Pfam" id="PF00078">
    <property type="entry name" value="RVT_1"/>
    <property type="match status" value="1"/>
</dbReference>
<dbReference type="SUPFAM" id="SSF56672">
    <property type="entry name" value="DNA/RNA polymerases"/>
    <property type="match status" value="1"/>
</dbReference>
<dbReference type="PROSITE" id="PS50878">
    <property type="entry name" value="RT_POL"/>
    <property type="match status" value="1"/>
</dbReference>
<protein>
    <recommendedName>
        <fullName evidence="1">Protein P</fullName>
    </recommendedName>
    <domain>
        <recommendedName>
            <fullName evidence="1">DNA-directed DNA polymerase</fullName>
            <ecNumber evidence="1">2.7.7.7</ecNumber>
        </recommendedName>
    </domain>
    <domain>
        <recommendedName>
            <fullName evidence="1">RNA-directed DNA polymerase</fullName>
            <ecNumber evidence="1">2.7.7.49</ecNumber>
        </recommendedName>
    </domain>
    <domain>
        <recommendedName>
            <fullName evidence="1">Ribonuclease H</fullName>
            <ecNumber evidence="1">3.1.26.4</ecNumber>
        </recommendedName>
    </domain>
</protein>
<organism>
    <name type="scientific">Hepatitis B virus genotype E (isolate Cote d'Ivoire/ABI-129/2003)</name>
    <name type="common">HBV-E</name>
    <dbReference type="NCBI Taxonomy" id="489496"/>
    <lineage>
        <taxon>Viruses</taxon>
        <taxon>Riboviria</taxon>
        <taxon>Pararnavirae</taxon>
        <taxon>Artverviricota</taxon>
        <taxon>Revtraviricetes</taxon>
        <taxon>Blubervirales</taxon>
        <taxon>Hepadnaviridae</taxon>
        <taxon>Orthohepadnavirus</taxon>
        <taxon>Hepatitis B virus</taxon>
        <taxon>hepatitis B virus genotype E</taxon>
    </lineage>
</organism>
<name>DPOL_HBVE2</name>
<gene>
    <name evidence="1" type="primary">P</name>
</gene>
<sequence length="842" mass="94627">MPLSYQHFRRILLLDEEAGPLEEELPRLADEDLNRRVAEDLNLQLPNVSIPWTHKVGNFTGLYSSTIPVFNPNWKTPSFPDIHLHQDIINKCEQFVGPLTVNEKRRLNLVMPARFFPIATKYLPLEKGIKPYYPDNVVNHYFQTRHYLHTLWKAGILYKRETTRSASFCGSPYSWEQELHHGAFLDGPSRMGEESFHHQSSGIFSRPPVGSSIQSKHQKSRLGPQSQQRPLDGSQQGRSGSIRAGVHSPTRRPFGVEPSGSRHAKNIASRSASCLHQSAVRKAAYPNHSTFERHSSSGHAVEFHNIPPSSAGSQSKRPVFSCWWLQFRNSEPCSDYCLTHLVNLLEDWGPCTEHGRHHIRIPRTPARVTGGVFLVDKNPHNTAESRLVVDFSQFSRGSSRVSWPKFAVPNLQSLTNLLSSNLSWLSLDVSAAFYHIPLHPAAMPHLLVGSSGLSRYVARLSSNSRIINHQYGTLPNLHDSCSRNLYVSLMLLFKTFGRKLHLYSHPIIMGFRKIPMGVGLSPFLLAQFTSAICSVVRRAFPHCLAFSYMDDVVLGAKSVQHLESLYTSVTNFLLSLGIHLNPNKTKRWGYSLNFMGYVIGSWGSLPQEHIRMKIKDCFRKLPVNRPIDWKVCQRIVGLLGFAAPFTQCGYPALMPLYACIQSKQAFTFSPTYKAFLCKQYLNLYPVARQRSGLCQVFADATPTGWGLAIGHQRMRGTFVAPLPIHTAELLAACFARSRSGAKLIGTDNSVVLSRKYTSFPWLLGCAANWILRGTSFVYVPSALNPADDPSRGRLGIYRPLLRLPFQPTTGRTSLYAVSPSVPSRLPDRVHFASPLHVAWRPP</sequence>
<comment type="function">
    <text evidence="1">Multifunctional enzyme that converts the viral RNA genome into dsDNA in viral cytoplasmic capsids. This enzyme displays a DNA polymerase activity that can copy either DNA or RNA templates, and a ribonuclease H (RNase H) activity that cleaves the RNA strand of RNA-DNA heteroduplexes in a partially processive 3'- to 5'-endonucleasic mode. Neo-synthesized pregenomic RNA (pgRNA) are encapsidated together with the P protein, and reverse-transcribed inside the nucleocapsid. Initiation of reverse-transcription occurs first by binding the epsilon loop on the pgRNA genome, and is initiated by protein priming, thereby the 5'-end of (-)DNA is covalently linked to P protein. Partial (+)DNA is synthesized from the (-)DNA template and generates the relaxed circular DNA (RC-DNA) genome. After budding and infection, the RC-DNA migrates in the nucleus, and is converted into a plasmid-like covalently closed circular DNA (cccDNA). The activity of P protein does not seem to be necessary for cccDNA generation, and is presumably released from (+)DNA by host nuclear DNA repair machinery.</text>
</comment>
<comment type="catalytic activity">
    <reaction evidence="1">
        <text>DNA(n) + a 2'-deoxyribonucleoside 5'-triphosphate = DNA(n+1) + diphosphate</text>
        <dbReference type="Rhea" id="RHEA:22508"/>
        <dbReference type="Rhea" id="RHEA-COMP:17339"/>
        <dbReference type="Rhea" id="RHEA-COMP:17340"/>
        <dbReference type="ChEBI" id="CHEBI:33019"/>
        <dbReference type="ChEBI" id="CHEBI:61560"/>
        <dbReference type="ChEBI" id="CHEBI:173112"/>
        <dbReference type="EC" id="2.7.7.7"/>
    </reaction>
</comment>
<comment type="catalytic activity">
    <reaction evidence="1">
        <text>DNA(n) + a 2'-deoxyribonucleoside 5'-triphosphate = DNA(n+1) + diphosphate</text>
        <dbReference type="Rhea" id="RHEA:22508"/>
        <dbReference type="Rhea" id="RHEA-COMP:17339"/>
        <dbReference type="Rhea" id="RHEA-COMP:17340"/>
        <dbReference type="ChEBI" id="CHEBI:33019"/>
        <dbReference type="ChEBI" id="CHEBI:61560"/>
        <dbReference type="ChEBI" id="CHEBI:173112"/>
        <dbReference type="EC" id="2.7.7.49"/>
    </reaction>
</comment>
<comment type="catalytic activity">
    <reaction evidence="1">
        <text>Endonucleolytic cleavage to 5'-phosphomonoester.</text>
        <dbReference type="EC" id="3.1.26.4"/>
    </reaction>
</comment>
<comment type="activity regulation">
    <text evidence="1">Activated by host HSP70 and HSP40 in vitro to be able to bind the epsilon loop of the pgRNA. Because deletion of the RNase H region renders the protein partly chaperone-independent, the chaperones may be needed indirectly to relieve occlusion of the RNA-binding site by this domain. Inhibited by several reverse-transcriptase inhibitors: Lamivudine, Adefovir and Entecavir.</text>
</comment>
<comment type="domain">
    <text evidence="1">Terminal protein domain (TP) is hepadnavirus-specific. Spacer domain is highly variable and separates the TP and RT domains. Polymerase/reverse-transcriptase domain (RT) and ribonuclease H domain (RH) are similar to retrovirus reverse transcriptase/RNase H.</text>
</comment>
<comment type="domain">
    <text evidence="1">The polymerase/reverse transcriptase (RT) and ribonuclease H (RH) domains are structured in five subdomains: finger, palm, thumb, connection and RNase H. Within the palm subdomain, the 'primer grip' region is thought to be involved in the positioning of the primer terminus for accommodating the incoming nucleotide. The RH domain stabilizes the association of RT with primer-template.</text>
</comment>
<comment type="miscellaneous">
    <text evidence="1">Hepadnaviral virions contain probably just one P protein molecule per particle.</text>
</comment>
<comment type="similarity">
    <text evidence="1">Belongs to the hepadnaviridae P protein family.</text>
</comment>
<proteinExistence type="inferred from homology"/>